<organism>
    <name type="scientific">Xanthomonas oryzae pv. oryzae (strain PXO99A)</name>
    <dbReference type="NCBI Taxonomy" id="360094"/>
    <lineage>
        <taxon>Bacteria</taxon>
        <taxon>Pseudomonadati</taxon>
        <taxon>Pseudomonadota</taxon>
        <taxon>Gammaproteobacteria</taxon>
        <taxon>Lysobacterales</taxon>
        <taxon>Lysobacteraceae</taxon>
        <taxon>Xanthomonas</taxon>
    </lineage>
</organism>
<gene>
    <name evidence="1" type="primary">ung</name>
    <name type="ordered locus">PXO_03712</name>
</gene>
<evidence type="ECO:0000255" key="1">
    <source>
        <dbReference type="HAMAP-Rule" id="MF_00148"/>
    </source>
</evidence>
<evidence type="ECO:0000256" key="2">
    <source>
        <dbReference type="SAM" id="MobiDB-lite"/>
    </source>
</evidence>
<proteinExistence type="inferred from homology"/>
<keyword id="KW-0963">Cytoplasm</keyword>
<keyword id="KW-0227">DNA damage</keyword>
<keyword id="KW-0234">DNA repair</keyword>
<keyword id="KW-0378">Hydrolase</keyword>
<name>UNG_XANOP</name>
<accession>B2SJF5</accession>
<comment type="function">
    <text evidence="1">Excises uracil residues from the DNA which can arise as a result of misincorporation of dUMP residues by DNA polymerase or due to deamination of cytosine.</text>
</comment>
<comment type="catalytic activity">
    <reaction evidence="1">
        <text>Hydrolyzes single-stranded DNA or mismatched double-stranded DNA and polynucleotides, releasing free uracil.</text>
        <dbReference type="EC" id="3.2.2.27"/>
    </reaction>
</comment>
<comment type="subcellular location">
    <subcellularLocation>
        <location evidence="1">Cytoplasm</location>
    </subcellularLocation>
</comment>
<comment type="similarity">
    <text evidence="1">Belongs to the uracil-DNA glycosylase (UDG) superfamily. UNG family.</text>
</comment>
<dbReference type="EC" id="3.2.2.27" evidence="1"/>
<dbReference type="EMBL" id="CP000967">
    <property type="protein sequence ID" value="ACD57153.1"/>
    <property type="molecule type" value="Genomic_DNA"/>
</dbReference>
<dbReference type="RefSeq" id="WP_011260610.1">
    <property type="nucleotide sequence ID" value="NC_010717.2"/>
</dbReference>
<dbReference type="SMR" id="B2SJF5"/>
<dbReference type="KEGG" id="xop:PXO_03712"/>
<dbReference type="eggNOG" id="COG0692">
    <property type="taxonomic scope" value="Bacteria"/>
</dbReference>
<dbReference type="HOGENOM" id="CLU_032162_3_1_6"/>
<dbReference type="Proteomes" id="UP000001740">
    <property type="component" value="Chromosome"/>
</dbReference>
<dbReference type="GO" id="GO:0005737">
    <property type="term" value="C:cytoplasm"/>
    <property type="evidence" value="ECO:0007669"/>
    <property type="project" value="UniProtKB-SubCell"/>
</dbReference>
<dbReference type="GO" id="GO:0004844">
    <property type="term" value="F:uracil DNA N-glycosylase activity"/>
    <property type="evidence" value="ECO:0007669"/>
    <property type="project" value="UniProtKB-UniRule"/>
</dbReference>
<dbReference type="GO" id="GO:0097510">
    <property type="term" value="P:base-excision repair, AP site formation via deaminated base removal"/>
    <property type="evidence" value="ECO:0007669"/>
    <property type="project" value="TreeGrafter"/>
</dbReference>
<dbReference type="CDD" id="cd10027">
    <property type="entry name" value="UDG-F1-like"/>
    <property type="match status" value="1"/>
</dbReference>
<dbReference type="FunFam" id="3.40.470.10:FF:000001">
    <property type="entry name" value="Uracil-DNA glycosylase"/>
    <property type="match status" value="1"/>
</dbReference>
<dbReference type="Gene3D" id="3.40.470.10">
    <property type="entry name" value="Uracil-DNA glycosylase-like domain"/>
    <property type="match status" value="1"/>
</dbReference>
<dbReference type="HAMAP" id="MF_00148">
    <property type="entry name" value="UDG"/>
    <property type="match status" value="1"/>
</dbReference>
<dbReference type="InterPro" id="IPR002043">
    <property type="entry name" value="UDG_fam1"/>
</dbReference>
<dbReference type="InterPro" id="IPR018085">
    <property type="entry name" value="Ura-DNA_Glyclase_AS"/>
</dbReference>
<dbReference type="InterPro" id="IPR005122">
    <property type="entry name" value="Uracil-DNA_glycosylase-like"/>
</dbReference>
<dbReference type="InterPro" id="IPR036895">
    <property type="entry name" value="Uracil-DNA_glycosylase-like_sf"/>
</dbReference>
<dbReference type="NCBIfam" id="NF003588">
    <property type="entry name" value="PRK05254.1-1"/>
    <property type="match status" value="1"/>
</dbReference>
<dbReference type="NCBIfam" id="NF003589">
    <property type="entry name" value="PRK05254.1-2"/>
    <property type="match status" value="1"/>
</dbReference>
<dbReference type="NCBIfam" id="NF003591">
    <property type="entry name" value="PRK05254.1-4"/>
    <property type="match status" value="1"/>
</dbReference>
<dbReference type="NCBIfam" id="NF003592">
    <property type="entry name" value="PRK05254.1-5"/>
    <property type="match status" value="1"/>
</dbReference>
<dbReference type="NCBIfam" id="TIGR00628">
    <property type="entry name" value="ung"/>
    <property type="match status" value="1"/>
</dbReference>
<dbReference type="PANTHER" id="PTHR11264">
    <property type="entry name" value="URACIL-DNA GLYCOSYLASE"/>
    <property type="match status" value="1"/>
</dbReference>
<dbReference type="PANTHER" id="PTHR11264:SF0">
    <property type="entry name" value="URACIL-DNA GLYCOSYLASE"/>
    <property type="match status" value="1"/>
</dbReference>
<dbReference type="Pfam" id="PF03167">
    <property type="entry name" value="UDG"/>
    <property type="match status" value="1"/>
</dbReference>
<dbReference type="SMART" id="SM00986">
    <property type="entry name" value="UDG"/>
    <property type="match status" value="1"/>
</dbReference>
<dbReference type="SMART" id="SM00987">
    <property type="entry name" value="UreE_C"/>
    <property type="match status" value="1"/>
</dbReference>
<dbReference type="SUPFAM" id="SSF52141">
    <property type="entry name" value="Uracil-DNA glycosylase-like"/>
    <property type="match status" value="1"/>
</dbReference>
<dbReference type="PROSITE" id="PS00130">
    <property type="entry name" value="U_DNA_GLYCOSYLASE"/>
    <property type="match status" value="1"/>
</dbReference>
<protein>
    <recommendedName>
        <fullName evidence="1">Uracil-DNA glycosylase</fullName>
        <shortName evidence="1">UDG</shortName>
        <ecNumber evidence="1">3.2.2.27</ecNumber>
    </recommendedName>
</protein>
<sequence length="241" mass="26753">MTEVEARIQLEPSWKAKVGDWLLCSQMQELSAFLRQRKAVGARVFPPGPQIFAAFDATPFDQVKVVILGQDPYHGEGQAHGLCFSVLPGVPVPPSLLNIYKEIQDDLGIARPDHGYLMPWARQGVLLLNAVLTVEQGRAGAHQNKGWEGFTDHVVETLNREREGLVFLLWGSYAQSKGRVIDQARHRVFKAPHPSPLSAHRGFLGCQHFSKTNAHLQRRGISPIDWSLPPRNELDTTSAGA</sequence>
<feature type="chain" id="PRO_1000096616" description="Uracil-DNA glycosylase">
    <location>
        <begin position="1"/>
        <end position="241"/>
    </location>
</feature>
<feature type="region of interest" description="Disordered" evidence="2">
    <location>
        <begin position="221"/>
        <end position="241"/>
    </location>
</feature>
<feature type="active site" description="Proton acceptor" evidence="1">
    <location>
        <position position="71"/>
    </location>
</feature>
<reference key="1">
    <citation type="journal article" date="2008" name="BMC Genomics">
        <title>Genome sequence and rapid evolution of the rice pathogen Xanthomonas oryzae pv. oryzae PXO99A.</title>
        <authorList>
            <person name="Salzberg S.L."/>
            <person name="Sommer D.D."/>
            <person name="Schatz M.C."/>
            <person name="Phillippy A.M."/>
            <person name="Rabinowicz P.D."/>
            <person name="Tsuge S."/>
            <person name="Furutani A."/>
            <person name="Ochiai H."/>
            <person name="Delcher A.L."/>
            <person name="Kelley D."/>
            <person name="Madupu R."/>
            <person name="Puiu D."/>
            <person name="Radune D."/>
            <person name="Shumway M."/>
            <person name="Trapnell C."/>
            <person name="Aparna G."/>
            <person name="Jha G."/>
            <person name="Pandey A."/>
            <person name="Patil P.B."/>
            <person name="Ishihara H."/>
            <person name="Meyer D.F."/>
            <person name="Szurek B."/>
            <person name="Verdier V."/>
            <person name="Koebnik R."/>
            <person name="Dow J.M."/>
            <person name="Ryan R.P."/>
            <person name="Hirata H."/>
            <person name="Tsuyumu S."/>
            <person name="Won Lee S."/>
            <person name="Seo Y.-S."/>
            <person name="Sriariyanum M."/>
            <person name="Ronald P.C."/>
            <person name="Sonti R.V."/>
            <person name="Van Sluys M.-A."/>
            <person name="Leach J.E."/>
            <person name="White F.F."/>
            <person name="Bogdanove A.J."/>
        </authorList>
    </citation>
    <scope>NUCLEOTIDE SEQUENCE [LARGE SCALE GENOMIC DNA]</scope>
    <source>
        <strain>PXO99A</strain>
    </source>
</reference>